<name>ALX_SHIFL</name>
<accession>Q83Q35</accession>
<accession>Q7UBI0</accession>
<feature type="chain" id="PRO_0000103416" description="Putative membrane-bound redox modulator Alx">
    <location>
        <begin position="1"/>
        <end position="320"/>
    </location>
</feature>
<feature type="topological domain" description="Periplasmic" evidence="2">
    <location>
        <begin position="1"/>
        <end position="6"/>
    </location>
</feature>
<feature type="transmembrane region" description="Helical" evidence="2">
    <location>
        <begin position="7"/>
        <end position="27"/>
    </location>
</feature>
<feature type="topological domain" description="Cytoplasmic" evidence="2">
    <location>
        <begin position="28"/>
        <end position="43"/>
    </location>
</feature>
<feature type="transmembrane region" description="Helical" evidence="2">
    <location>
        <begin position="44"/>
        <end position="64"/>
    </location>
</feature>
<feature type="topological domain" description="Periplasmic" evidence="2">
    <location>
        <begin position="65"/>
        <end position="89"/>
    </location>
</feature>
<feature type="transmembrane region" description="Helical" evidence="2">
    <location>
        <begin position="90"/>
        <end position="110"/>
    </location>
</feature>
<feature type="topological domain" description="Cytoplasmic" evidence="2">
    <location>
        <begin position="111"/>
        <end position="113"/>
    </location>
</feature>
<feature type="transmembrane region" description="Helical" evidence="2">
    <location>
        <begin position="114"/>
        <end position="134"/>
    </location>
</feature>
<feature type="topological domain" description="Periplasmic" evidence="2">
    <location>
        <position position="135"/>
    </location>
</feature>
<feature type="transmembrane region" description="Helical" evidence="2">
    <location>
        <begin position="136"/>
        <end position="156"/>
    </location>
</feature>
<feature type="topological domain" description="Cytoplasmic" evidence="2">
    <location>
        <begin position="157"/>
        <end position="198"/>
    </location>
</feature>
<feature type="transmembrane region" description="Helical" evidence="2">
    <location>
        <begin position="199"/>
        <end position="219"/>
    </location>
</feature>
<feature type="topological domain" description="Periplasmic" evidence="2">
    <location>
        <begin position="220"/>
        <end position="225"/>
    </location>
</feature>
<feature type="transmembrane region" description="Helical" evidence="2">
    <location>
        <begin position="226"/>
        <end position="246"/>
    </location>
</feature>
<feature type="topological domain" description="Cytoplasmic" evidence="2">
    <location>
        <begin position="247"/>
        <end position="261"/>
    </location>
</feature>
<feature type="transmembrane region" description="Helical" evidence="2">
    <location>
        <begin position="262"/>
        <end position="282"/>
    </location>
</feature>
<feature type="topological domain" description="Periplasmic" evidence="2">
    <location>
        <begin position="283"/>
        <end position="286"/>
    </location>
</feature>
<feature type="transmembrane region" description="Helical" evidence="2">
    <location>
        <begin position="287"/>
        <end position="307"/>
    </location>
</feature>
<feature type="topological domain" description="Cytoplasmic" evidence="2">
    <location>
        <begin position="308"/>
        <end position="320"/>
    </location>
</feature>
<feature type="sequence conflict" description="In Ref. 2; AAP18413." evidence="3" ref="2">
    <original>G</original>
    <variation>GE</variation>
    <location>
        <position position="320"/>
    </location>
</feature>
<dbReference type="EMBL" id="AE005674">
    <property type="protein sequence ID" value="AAN44600.1"/>
    <property type="molecule type" value="Genomic_DNA"/>
</dbReference>
<dbReference type="EMBL" id="AE014073">
    <property type="protein sequence ID" value="AAP18413.1"/>
    <property type="molecule type" value="Genomic_DNA"/>
</dbReference>
<dbReference type="RefSeq" id="WP_001098804.1">
    <property type="nucleotide sequence ID" value="NZ_CP123365.1"/>
</dbReference>
<dbReference type="STRING" id="198214.SF3128"/>
<dbReference type="PaxDb" id="198214-SF3128"/>
<dbReference type="KEGG" id="sfl:SF3128"/>
<dbReference type="KEGG" id="sfx:S3335"/>
<dbReference type="PATRIC" id="fig|198214.7.peg.3715"/>
<dbReference type="HOGENOM" id="CLU_045644_1_2_6"/>
<dbReference type="Proteomes" id="UP000001006">
    <property type="component" value="Chromosome"/>
</dbReference>
<dbReference type="Proteomes" id="UP000002673">
    <property type="component" value="Chromosome"/>
</dbReference>
<dbReference type="GO" id="GO:0005886">
    <property type="term" value="C:plasma membrane"/>
    <property type="evidence" value="ECO:0007669"/>
    <property type="project" value="UniProtKB-SubCell"/>
</dbReference>
<dbReference type="InterPro" id="IPR005496">
    <property type="entry name" value="Integral_membrane_TerC"/>
</dbReference>
<dbReference type="InterPro" id="IPR022369">
    <property type="entry name" value="Integral_membrane_TerC_rswitch"/>
</dbReference>
<dbReference type="NCBIfam" id="TIGR03718">
    <property type="entry name" value="R_switched_Alx"/>
    <property type="match status" value="1"/>
</dbReference>
<dbReference type="PANTHER" id="PTHR30238">
    <property type="entry name" value="MEMBRANE BOUND PREDICTED REDOX MODULATOR"/>
    <property type="match status" value="1"/>
</dbReference>
<dbReference type="PANTHER" id="PTHR30238:SF0">
    <property type="entry name" value="THYLAKOID MEMBRANE PROTEIN TERC, CHLOROPLASTIC"/>
    <property type="match status" value="1"/>
</dbReference>
<dbReference type="Pfam" id="PF03741">
    <property type="entry name" value="TerC"/>
    <property type="match status" value="1"/>
</dbReference>
<sequence length="320" mass="35852">MNTVGTPLLWGGFAVVVAIMLAIDLLLQGRRGAHAMTMKQAAAWSLVWVTLSLLFNAAFWWYLVQTEGRAVADPQALAFLTGYLIEKSLAVDNVFVWLMLFSYFSVPAALQRRVLVYGVLGAIVLRTIMIFTGSWLISQFDWILYIFGAFLLFTGVKMALAHEDESGIGDKPLVRWLRGHLRMTDTIDNEHFFVRKNGLLYATPLMLVLILVELSDVIFAVDSIPAIFAVTTDPFIVLTSNLFAILGLRAMYFLLAGVAERFSMLKYGLAVILVFIGIKMLIVDFYHIPIAVSLGVVFGILVMTFIINAWVNYRHDKQRG</sequence>
<comment type="function">
    <text evidence="1">Has been proposed to be a redox modulator.</text>
</comment>
<comment type="subcellular location">
    <subcellularLocation>
        <location evidence="1">Cell inner membrane</location>
        <topology evidence="3">Multi-pass membrane protein</topology>
    </subcellularLocation>
</comment>
<comment type="similarity">
    <text evidence="3">Belongs to the TerC family.</text>
</comment>
<proteinExistence type="inferred from homology"/>
<evidence type="ECO:0000250" key="1">
    <source>
        <dbReference type="UniProtKB" id="P42601"/>
    </source>
</evidence>
<evidence type="ECO:0000255" key="2"/>
<evidence type="ECO:0000305" key="3"/>
<gene>
    <name type="primary">alx</name>
    <name type="ordered locus">SF3128</name>
    <name type="ordered locus">S3335</name>
</gene>
<keyword id="KW-0997">Cell inner membrane</keyword>
<keyword id="KW-1003">Cell membrane</keyword>
<keyword id="KW-0472">Membrane</keyword>
<keyword id="KW-1185">Reference proteome</keyword>
<keyword id="KW-0812">Transmembrane</keyword>
<keyword id="KW-1133">Transmembrane helix</keyword>
<protein>
    <recommendedName>
        <fullName>Putative membrane-bound redox modulator Alx</fullName>
    </recommendedName>
</protein>
<organism>
    <name type="scientific">Shigella flexneri</name>
    <dbReference type="NCBI Taxonomy" id="623"/>
    <lineage>
        <taxon>Bacteria</taxon>
        <taxon>Pseudomonadati</taxon>
        <taxon>Pseudomonadota</taxon>
        <taxon>Gammaproteobacteria</taxon>
        <taxon>Enterobacterales</taxon>
        <taxon>Enterobacteriaceae</taxon>
        <taxon>Shigella</taxon>
    </lineage>
</organism>
<reference key="1">
    <citation type="journal article" date="2002" name="Nucleic Acids Res.">
        <title>Genome sequence of Shigella flexneri 2a: insights into pathogenicity through comparison with genomes of Escherichia coli K12 and O157.</title>
        <authorList>
            <person name="Jin Q."/>
            <person name="Yuan Z."/>
            <person name="Xu J."/>
            <person name="Wang Y."/>
            <person name="Shen Y."/>
            <person name="Lu W."/>
            <person name="Wang J."/>
            <person name="Liu H."/>
            <person name="Yang J."/>
            <person name="Yang F."/>
            <person name="Zhang X."/>
            <person name="Zhang J."/>
            <person name="Yang G."/>
            <person name="Wu H."/>
            <person name="Qu D."/>
            <person name="Dong J."/>
            <person name="Sun L."/>
            <person name="Xue Y."/>
            <person name="Zhao A."/>
            <person name="Gao Y."/>
            <person name="Zhu J."/>
            <person name="Kan B."/>
            <person name="Ding K."/>
            <person name="Chen S."/>
            <person name="Cheng H."/>
            <person name="Yao Z."/>
            <person name="He B."/>
            <person name="Chen R."/>
            <person name="Ma D."/>
            <person name="Qiang B."/>
            <person name="Wen Y."/>
            <person name="Hou Y."/>
            <person name="Yu J."/>
        </authorList>
    </citation>
    <scope>NUCLEOTIDE SEQUENCE [LARGE SCALE GENOMIC DNA]</scope>
    <source>
        <strain>301 / Serotype 2a</strain>
    </source>
</reference>
<reference key="2">
    <citation type="journal article" date="2003" name="Infect. Immun.">
        <title>Complete genome sequence and comparative genomics of Shigella flexneri serotype 2a strain 2457T.</title>
        <authorList>
            <person name="Wei J."/>
            <person name="Goldberg M.B."/>
            <person name="Burland V."/>
            <person name="Venkatesan M.M."/>
            <person name="Deng W."/>
            <person name="Fournier G."/>
            <person name="Mayhew G.F."/>
            <person name="Plunkett G. III"/>
            <person name="Rose D.J."/>
            <person name="Darling A."/>
            <person name="Mau B."/>
            <person name="Perna N.T."/>
            <person name="Payne S.M."/>
            <person name="Runyen-Janecky L.J."/>
            <person name="Zhou S."/>
            <person name="Schwartz D.C."/>
            <person name="Blattner F.R."/>
        </authorList>
    </citation>
    <scope>NUCLEOTIDE SEQUENCE [LARGE SCALE GENOMIC DNA]</scope>
    <source>
        <strain>ATCC 700930 / 2457T / Serotype 2a</strain>
    </source>
</reference>